<evidence type="ECO:0000305" key="1"/>
<name>Y1170_HAEIN</name>
<protein>
    <recommendedName>
        <fullName>Uncharacterized PabA-like protein HI_1170</fullName>
    </recommendedName>
</protein>
<organism>
    <name type="scientific">Haemophilus influenzae (strain ATCC 51907 / DSM 11121 / KW20 / Rd)</name>
    <dbReference type="NCBI Taxonomy" id="71421"/>
    <lineage>
        <taxon>Bacteria</taxon>
        <taxon>Pseudomonadati</taxon>
        <taxon>Pseudomonadota</taxon>
        <taxon>Gammaproteobacteria</taxon>
        <taxon>Pasteurellales</taxon>
        <taxon>Pasteurellaceae</taxon>
        <taxon>Haemophilus</taxon>
    </lineage>
</organism>
<proteinExistence type="predicted"/>
<sequence>MAQSTMQHFIEQANHYGKQRTPFFFLIDFEKEKPLICPLENSAQQGIYFDILGKRNCTISPRPLPLNFTKHPMPFSHYQQGFKLVQSELQKGNSYLLNLTYPTEISGNLSLEQIFHQTNAPYKLWLQDQFVCFSPECFVNIHDNNIFTYPMKGTINATLPDAENQLLTNEKEQREHYTIVDLMRNDLSMVAEHIQVKKFRYIDRIKTQKGKILQTSSEIYGKLNENWQNQIGDILATLLPAGSISGAPKEKTTQIIQQAEKQKRGYYTGIFGIFDGKTLQSAVAIRFISQVDEKFYFHSGGGITIHSNAQDEYEELLEKVYLPIEGAD</sequence>
<gene>
    <name type="ordered locus">HI_1170</name>
</gene>
<comment type="similarity">
    <text evidence="1">To the C-terminal of para-aminobenzoate synthase component I.</text>
</comment>
<keyword id="KW-1185">Reference proteome</keyword>
<accession>Q57527</accession>
<accession>O05047</accession>
<feature type="chain" id="PRO_0000154153" description="Uncharacterized PabA-like protein HI_1170">
    <location>
        <begin position="1"/>
        <end position="328"/>
    </location>
</feature>
<reference key="1">
    <citation type="journal article" date="1995" name="Science">
        <title>Whole-genome random sequencing and assembly of Haemophilus influenzae Rd.</title>
        <authorList>
            <person name="Fleischmann R.D."/>
            <person name="Adams M.D."/>
            <person name="White O."/>
            <person name="Clayton R.A."/>
            <person name="Kirkness E.F."/>
            <person name="Kerlavage A.R."/>
            <person name="Bult C.J."/>
            <person name="Tomb J.-F."/>
            <person name="Dougherty B.A."/>
            <person name="Merrick J.M."/>
            <person name="McKenney K."/>
            <person name="Sutton G.G."/>
            <person name="FitzHugh W."/>
            <person name="Fields C.A."/>
            <person name="Gocayne J.D."/>
            <person name="Scott J.D."/>
            <person name="Shirley R."/>
            <person name="Liu L.-I."/>
            <person name="Glodek A."/>
            <person name="Kelley J.M."/>
            <person name="Weidman J.F."/>
            <person name="Phillips C.A."/>
            <person name="Spriggs T."/>
            <person name="Hedblom E."/>
            <person name="Cotton M.D."/>
            <person name="Utterback T.R."/>
            <person name="Hanna M.C."/>
            <person name="Nguyen D.T."/>
            <person name="Saudek D.M."/>
            <person name="Brandon R.C."/>
            <person name="Fine L.D."/>
            <person name="Fritchman J.L."/>
            <person name="Fuhrmann J.L."/>
            <person name="Geoghagen N.S.M."/>
            <person name="Gnehm C.L."/>
            <person name="McDonald L.A."/>
            <person name="Small K.V."/>
            <person name="Fraser C.M."/>
            <person name="Smith H.O."/>
            <person name="Venter J.C."/>
        </authorList>
    </citation>
    <scope>NUCLEOTIDE SEQUENCE [LARGE SCALE GENOMIC DNA]</scope>
    <source>
        <strain>ATCC 51907 / DSM 11121 / KW20 / Rd</strain>
    </source>
</reference>
<dbReference type="EMBL" id="L42023">
    <property type="protein sequence ID" value="AAC22834.1"/>
    <property type="molecule type" value="Genomic_DNA"/>
</dbReference>
<dbReference type="PIR" id="F64187">
    <property type="entry name" value="F64187"/>
</dbReference>
<dbReference type="RefSeq" id="YP_008530235.1">
    <property type="nucleotide sequence ID" value="NC_000907.1"/>
</dbReference>
<dbReference type="SMR" id="Q57527"/>
<dbReference type="STRING" id="71421.HI_1170"/>
<dbReference type="EnsemblBacteria" id="AAC22834">
    <property type="protein sequence ID" value="AAC22834"/>
    <property type="gene ID" value="HI_1170"/>
</dbReference>
<dbReference type="KEGG" id="hin:HI_1170"/>
<dbReference type="eggNOG" id="COG0147">
    <property type="taxonomic scope" value="Bacteria"/>
</dbReference>
<dbReference type="HOGENOM" id="CLU_006493_1_0_6"/>
<dbReference type="OrthoDB" id="9803598at2"/>
<dbReference type="PhylomeDB" id="Q57527"/>
<dbReference type="BioCyc" id="HINF71421:G1GJ1-1204-MONOMER"/>
<dbReference type="Proteomes" id="UP000000579">
    <property type="component" value="Chromosome"/>
</dbReference>
<dbReference type="GO" id="GO:0046820">
    <property type="term" value="F:4-amino-4-deoxychorismate synthase activity"/>
    <property type="evidence" value="ECO:0000318"/>
    <property type="project" value="GO_Central"/>
</dbReference>
<dbReference type="GO" id="GO:0000162">
    <property type="term" value="P:L-tryptophan biosynthetic process"/>
    <property type="evidence" value="ECO:0000318"/>
    <property type="project" value="GO_Central"/>
</dbReference>
<dbReference type="Gene3D" id="3.60.120.10">
    <property type="entry name" value="Anthranilate synthase"/>
    <property type="match status" value="1"/>
</dbReference>
<dbReference type="InterPro" id="IPR005801">
    <property type="entry name" value="ADC_synthase"/>
</dbReference>
<dbReference type="InterPro" id="IPR019999">
    <property type="entry name" value="Anth_synth_I-like"/>
</dbReference>
<dbReference type="InterPro" id="IPR015890">
    <property type="entry name" value="Chorismate_C"/>
</dbReference>
<dbReference type="NCBIfam" id="NF005486">
    <property type="entry name" value="PRK07093.1"/>
    <property type="match status" value="1"/>
</dbReference>
<dbReference type="PANTHER" id="PTHR11236">
    <property type="entry name" value="AMINOBENZOATE/ANTHRANILATE SYNTHASE"/>
    <property type="match status" value="1"/>
</dbReference>
<dbReference type="PANTHER" id="PTHR11236:SF50">
    <property type="entry name" value="AMINODEOXYCHORISMATE SYNTHASE COMPONENT 1"/>
    <property type="match status" value="1"/>
</dbReference>
<dbReference type="Pfam" id="PF00425">
    <property type="entry name" value="Chorismate_bind"/>
    <property type="match status" value="1"/>
</dbReference>
<dbReference type="PRINTS" id="PR00095">
    <property type="entry name" value="ANTSNTHASEI"/>
</dbReference>
<dbReference type="SUPFAM" id="SSF56322">
    <property type="entry name" value="ADC synthase"/>
    <property type="match status" value="1"/>
</dbReference>